<accession>Q8KTB8</accession>
<protein>
    <recommendedName>
        <fullName evidence="1">Elongation factor G</fullName>
        <shortName evidence="1">EF-G</shortName>
    </recommendedName>
</protein>
<proteinExistence type="inferred from homology"/>
<evidence type="ECO:0000255" key="1">
    <source>
        <dbReference type="HAMAP-Rule" id="MF_00054"/>
    </source>
</evidence>
<name>EFG_RICS2</name>
<reference key="1">
    <citation type="journal article" date="2002" name="Mol. Biol. Evol.">
        <title>Proliferation and deterioration of Rickettsia palindromic elements.</title>
        <authorList>
            <person name="Amiri H."/>
            <person name="Alsmark C.M."/>
            <person name="Andersson S.G.E."/>
        </authorList>
    </citation>
    <scope>NUCLEOTIDE SEQUENCE [GENOMIC DNA]</scope>
    <source>
        <strain>ATCC VR-151 / 246</strain>
    </source>
</reference>
<feature type="chain" id="PRO_0000091204" description="Elongation factor G">
    <location>
        <begin position="1"/>
        <end position="699"/>
    </location>
</feature>
<feature type="domain" description="tr-type G">
    <location>
        <begin position="8"/>
        <end position="283"/>
    </location>
</feature>
<feature type="binding site" evidence="1">
    <location>
        <begin position="17"/>
        <end position="24"/>
    </location>
    <ligand>
        <name>GTP</name>
        <dbReference type="ChEBI" id="CHEBI:37565"/>
    </ligand>
</feature>
<feature type="binding site" evidence="1">
    <location>
        <begin position="81"/>
        <end position="85"/>
    </location>
    <ligand>
        <name>GTP</name>
        <dbReference type="ChEBI" id="CHEBI:37565"/>
    </ligand>
</feature>
<feature type="binding site" evidence="1">
    <location>
        <begin position="135"/>
        <end position="138"/>
    </location>
    <ligand>
        <name>GTP</name>
        <dbReference type="ChEBI" id="CHEBI:37565"/>
    </ligand>
</feature>
<organism>
    <name type="scientific">Rickettsia sibirica (strain ATCC VR-151 / 246)</name>
    <dbReference type="NCBI Taxonomy" id="272951"/>
    <lineage>
        <taxon>Bacteria</taxon>
        <taxon>Pseudomonadati</taxon>
        <taxon>Pseudomonadota</taxon>
        <taxon>Alphaproteobacteria</taxon>
        <taxon>Rickettsiales</taxon>
        <taxon>Rickettsiaceae</taxon>
        <taxon>Rickettsieae</taxon>
        <taxon>Rickettsia</taxon>
        <taxon>spotted fever group</taxon>
        <taxon>Rickettsia sibirica subgroup</taxon>
    </lineage>
</organism>
<keyword id="KW-0963">Cytoplasm</keyword>
<keyword id="KW-0251">Elongation factor</keyword>
<keyword id="KW-0342">GTP-binding</keyword>
<keyword id="KW-0547">Nucleotide-binding</keyword>
<keyword id="KW-0648">Protein biosynthesis</keyword>
<dbReference type="EMBL" id="AF502172">
    <property type="protein sequence ID" value="AAM90917.1"/>
    <property type="molecule type" value="Genomic_DNA"/>
</dbReference>
<dbReference type="RefSeq" id="WP_004996645.1">
    <property type="nucleotide sequence ID" value="NZ_AABW01000001.1"/>
</dbReference>
<dbReference type="SMR" id="Q8KTB8"/>
<dbReference type="GeneID" id="95361889"/>
<dbReference type="GO" id="GO:0005737">
    <property type="term" value="C:cytoplasm"/>
    <property type="evidence" value="ECO:0007669"/>
    <property type="project" value="UniProtKB-SubCell"/>
</dbReference>
<dbReference type="GO" id="GO:0005525">
    <property type="term" value="F:GTP binding"/>
    <property type="evidence" value="ECO:0007669"/>
    <property type="project" value="UniProtKB-UniRule"/>
</dbReference>
<dbReference type="GO" id="GO:0003924">
    <property type="term" value="F:GTPase activity"/>
    <property type="evidence" value="ECO:0007669"/>
    <property type="project" value="InterPro"/>
</dbReference>
<dbReference type="GO" id="GO:0003746">
    <property type="term" value="F:translation elongation factor activity"/>
    <property type="evidence" value="ECO:0007669"/>
    <property type="project" value="UniProtKB-UniRule"/>
</dbReference>
<dbReference type="GO" id="GO:0032790">
    <property type="term" value="P:ribosome disassembly"/>
    <property type="evidence" value="ECO:0007669"/>
    <property type="project" value="TreeGrafter"/>
</dbReference>
<dbReference type="CDD" id="cd01886">
    <property type="entry name" value="EF-G"/>
    <property type="match status" value="1"/>
</dbReference>
<dbReference type="CDD" id="cd16262">
    <property type="entry name" value="EFG_III"/>
    <property type="match status" value="1"/>
</dbReference>
<dbReference type="CDD" id="cd01434">
    <property type="entry name" value="EFG_mtEFG1_IV"/>
    <property type="match status" value="1"/>
</dbReference>
<dbReference type="CDD" id="cd03713">
    <property type="entry name" value="EFG_mtEFG_C"/>
    <property type="match status" value="1"/>
</dbReference>
<dbReference type="CDD" id="cd04088">
    <property type="entry name" value="EFG_mtEFG_II"/>
    <property type="match status" value="1"/>
</dbReference>
<dbReference type="FunFam" id="2.40.30.10:FF:000006">
    <property type="entry name" value="Elongation factor G"/>
    <property type="match status" value="1"/>
</dbReference>
<dbReference type="FunFam" id="3.30.230.10:FF:000003">
    <property type="entry name" value="Elongation factor G"/>
    <property type="match status" value="1"/>
</dbReference>
<dbReference type="FunFam" id="3.30.70.240:FF:000001">
    <property type="entry name" value="Elongation factor G"/>
    <property type="match status" value="1"/>
</dbReference>
<dbReference type="FunFam" id="3.30.70.870:FF:000001">
    <property type="entry name" value="Elongation factor G"/>
    <property type="match status" value="1"/>
</dbReference>
<dbReference type="FunFam" id="3.40.50.300:FF:000029">
    <property type="entry name" value="Elongation factor G"/>
    <property type="match status" value="1"/>
</dbReference>
<dbReference type="Gene3D" id="3.30.230.10">
    <property type="match status" value="1"/>
</dbReference>
<dbReference type="Gene3D" id="3.30.70.240">
    <property type="match status" value="1"/>
</dbReference>
<dbReference type="Gene3D" id="3.30.70.870">
    <property type="entry name" value="Elongation Factor G (Translational Gtpase), domain 3"/>
    <property type="match status" value="1"/>
</dbReference>
<dbReference type="Gene3D" id="3.40.50.300">
    <property type="entry name" value="P-loop containing nucleotide triphosphate hydrolases"/>
    <property type="match status" value="1"/>
</dbReference>
<dbReference type="Gene3D" id="2.40.30.10">
    <property type="entry name" value="Translation factors"/>
    <property type="match status" value="1"/>
</dbReference>
<dbReference type="HAMAP" id="MF_00054_B">
    <property type="entry name" value="EF_G_EF_2_B"/>
    <property type="match status" value="1"/>
</dbReference>
<dbReference type="InterPro" id="IPR053905">
    <property type="entry name" value="EF-G-like_DII"/>
</dbReference>
<dbReference type="InterPro" id="IPR041095">
    <property type="entry name" value="EFG_II"/>
</dbReference>
<dbReference type="InterPro" id="IPR009022">
    <property type="entry name" value="EFG_III"/>
</dbReference>
<dbReference type="InterPro" id="IPR035647">
    <property type="entry name" value="EFG_III/V"/>
</dbReference>
<dbReference type="InterPro" id="IPR047872">
    <property type="entry name" value="EFG_IV"/>
</dbReference>
<dbReference type="InterPro" id="IPR035649">
    <property type="entry name" value="EFG_V"/>
</dbReference>
<dbReference type="InterPro" id="IPR000640">
    <property type="entry name" value="EFG_V-like"/>
</dbReference>
<dbReference type="InterPro" id="IPR031157">
    <property type="entry name" value="G_TR_CS"/>
</dbReference>
<dbReference type="InterPro" id="IPR027417">
    <property type="entry name" value="P-loop_NTPase"/>
</dbReference>
<dbReference type="InterPro" id="IPR020568">
    <property type="entry name" value="Ribosomal_Su5_D2-typ_SF"/>
</dbReference>
<dbReference type="InterPro" id="IPR014721">
    <property type="entry name" value="Ribsml_uS5_D2-typ_fold_subgr"/>
</dbReference>
<dbReference type="InterPro" id="IPR005225">
    <property type="entry name" value="Small_GTP-bd"/>
</dbReference>
<dbReference type="InterPro" id="IPR000795">
    <property type="entry name" value="T_Tr_GTP-bd_dom"/>
</dbReference>
<dbReference type="InterPro" id="IPR009000">
    <property type="entry name" value="Transl_B-barrel_sf"/>
</dbReference>
<dbReference type="InterPro" id="IPR004540">
    <property type="entry name" value="Transl_elong_EFG/EF2"/>
</dbReference>
<dbReference type="InterPro" id="IPR005517">
    <property type="entry name" value="Transl_elong_EFG/EF2_IV"/>
</dbReference>
<dbReference type="NCBIfam" id="TIGR00484">
    <property type="entry name" value="EF-G"/>
    <property type="match status" value="1"/>
</dbReference>
<dbReference type="NCBIfam" id="NF009381">
    <property type="entry name" value="PRK12740.1-5"/>
    <property type="match status" value="1"/>
</dbReference>
<dbReference type="NCBIfam" id="TIGR00231">
    <property type="entry name" value="small_GTP"/>
    <property type="match status" value="1"/>
</dbReference>
<dbReference type="PANTHER" id="PTHR43261:SF1">
    <property type="entry name" value="RIBOSOME-RELEASING FACTOR 2, MITOCHONDRIAL"/>
    <property type="match status" value="1"/>
</dbReference>
<dbReference type="PANTHER" id="PTHR43261">
    <property type="entry name" value="TRANSLATION ELONGATION FACTOR G-RELATED"/>
    <property type="match status" value="1"/>
</dbReference>
<dbReference type="Pfam" id="PF22042">
    <property type="entry name" value="EF-G_D2"/>
    <property type="match status" value="1"/>
</dbReference>
<dbReference type="Pfam" id="PF00679">
    <property type="entry name" value="EFG_C"/>
    <property type="match status" value="1"/>
</dbReference>
<dbReference type="Pfam" id="PF14492">
    <property type="entry name" value="EFG_III"/>
    <property type="match status" value="1"/>
</dbReference>
<dbReference type="Pfam" id="PF03764">
    <property type="entry name" value="EFG_IV"/>
    <property type="match status" value="1"/>
</dbReference>
<dbReference type="Pfam" id="PF00009">
    <property type="entry name" value="GTP_EFTU"/>
    <property type="match status" value="1"/>
</dbReference>
<dbReference type="PRINTS" id="PR00315">
    <property type="entry name" value="ELONGATNFCT"/>
</dbReference>
<dbReference type="SMART" id="SM00838">
    <property type="entry name" value="EFG_C"/>
    <property type="match status" value="1"/>
</dbReference>
<dbReference type="SMART" id="SM00889">
    <property type="entry name" value="EFG_IV"/>
    <property type="match status" value="1"/>
</dbReference>
<dbReference type="SUPFAM" id="SSF54980">
    <property type="entry name" value="EF-G C-terminal domain-like"/>
    <property type="match status" value="2"/>
</dbReference>
<dbReference type="SUPFAM" id="SSF52540">
    <property type="entry name" value="P-loop containing nucleoside triphosphate hydrolases"/>
    <property type="match status" value="1"/>
</dbReference>
<dbReference type="SUPFAM" id="SSF54211">
    <property type="entry name" value="Ribosomal protein S5 domain 2-like"/>
    <property type="match status" value="1"/>
</dbReference>
<dbReference type="SUPFAM" id="SSF50447">
    <property type="entry name" value="Translation proteins"/>
    <property type="match status" value="1"/>
</dbReference>
<dbReference type="PROSITE" id="PS00301">
    <property type="entry name" value="G_TR_1"/>
    <property type="match status" value="1"/>
</dbReference>
<dbReference type="PROSITE" id="PS51722">
    <property type="entry name" value="G_TR_2"/>
    <property type="match status" value="1"/>
</dbReference>
<gene>
    <name evidence="1" type="primary">fusA</name>
</gene>
<sequence>MSKINKLEHIRNIGICAHIDAGKTTTTERILYYTGKSHKIGEVHEGGATMDWMEQEQERGITITSAATTCRWQDKIINIIDTPGHVDFTIEVERSLRVLDGAVAVFDGVAGVEPQSETVWRQADKYNVPRMCFVNKMDRMGADFYRCVEMLKDRLGAKPLVIQLPVGIEENFKGIIDLIKMKAVIWKDEALGAEYFEEDIPADMKDKAEEYRAKLLDMVVELDDHVMEKYLSGEEVTAEEIKRLIRKGTISAAFYPVLCGSAFKNKGVQPLLDAVVDFLPSPIDIGIVKGMEVSTGAEKDFPISVTEPFAALAFKIMNDPFVGSLTFIRIYSGKITSGTTVINTVKNKREKIGRMLLMHANNREDVKEASAGDIVALAGLKDTTTGDTLSDIDQQVILERMEFPEPVIELAVEPKSTADQEKMGLALSRLAAEDPSFRVSTDYETGQTVIKGMGELHLEIIIDRMRREFKVEANIGAPQVAYRETITKVCEIDYTHKKQSGGAGQFARVKIIFEPLKEVKDLKDEDKNKNFVFESKIIGGAVPKEYIPGVEKGLNNIRETGVIAGYPMIDFKATLVDGAFHDVDSSVLAFEIAAKAAFREGMPKGNPKLLEPIMQVEVITPDEYMGDIIGDLNSRRGQIQSMDPRGNAQVVTANVPLAEMFGYVNTLRSLSQGRAQFSMIFSHYDQVPSQVADIIKAKK</sequence>
<comment type="function">
    <text evidence="1">Catalyzes the GTP-dependent ribosomal translocation step during translation elongation. During this step, the ribosome changes from the pre-translocational (PRE) to the post-translocational (POST) state as the newly formed A-site-bound peptidyl-tRNA and P-site-bound deacylated tRNA move to the P and E sites, respectively. Catalyzes the coordinated movement of the two tRNA molecules, the mRNA and conformational changes in the ribosome.</text>
</comment>
<comment type="subcellular location">
    <subcellularLocation>
        <location evidence="1">Cytoplasm</location>
    </subcellularLocation>
</comment>
<comment type="similarity">
    <text evidence="1">Belongs to the TRAFAC class translation factor GTPase superfamily. Classic translation factor GTPase family. EF-G/EF-2 subfamily.</text>
</comment>